<sequence>MSGPNYKADFPLLLRSPRVHYLDSAATTQRPAPVLERVMHYHTHLNGNAGRGSHELAVESALLIENTRKKTAQFINAAPTHDIVFTKSCTESLNIIAHCYALPRLRAGDEIVLAISNHHANIVPWQHVCRCTGATIQWLYPDAEGNLDIQEAQKKIRACTKIVSFSAVVNATGAVNPAQELTALAHQVGAVVVIDGAQAMVHGVPNVADLGCDFFVFSGHKMFSLFGVGVLCAPHTLLESMPPFLYGGGMVDFVTEQESVFKGAPHKYEGGSANTAAVVSLCAAIEYCESLESSAVRASVHALDAALLARLEELPFLETYHARARERLGIIAFNVKNVHSHDTAHILGEEGVMVRSGDHCSKPFMTHLSIQSCCRASFCIYNTMEDVEALTRALHAVGRIFQCS</sequence>
<keyword id="KW-0663">Pyridoxal phosphate</keyword>
<keyword id="KW-1185">Reference proteome</keyword>
<keyword id="KW-0808">Transferase</keyword>
<organism>
    <name type="scientific">Treponema pallidum (strain Nichols)</name>
    <dbReference type="NCBI Taxonomy" id="243276"/>
    <lineage>
        <taxon>Bacteria</taxon>
        <taxon>Pseudomonadati</taxon>
        <taxon>Spirochaetota</taxon>
        <taxon>Spirochaetia</taxon>
        <taxon>Spirochaetales</taxon>
        <taxon>Treponemataceae</taxon>
        <taxon>Treponema</taxon>
    </lineage>
</organism>
<protein>
    <recommendedName>
        <fullName>Probable cysteine desulfurase</fullName>
        <ecNumber>2.8.1.7</ecNumber>
    </recommendedName>
</protein>
<accession>O83623</accession>
<name>CSD_TREPA</name>
<reference key="1">
    <citation type="journal article" date="1998" name="Science">
        <title>Complete genome sequence of Treponema pallidum, the syphilis spirochete.</title>
        <authorList>
            <person name="Fraser C.M."/>
            <person name="Norris S.J."/>
            <person name="Weinstock G.M."/>
            <person name="White O."/>
            <person name="Sutton G.G."/>
            <person name="Dodson R.J."/>
            <person name="Gwinn M.L."/>
            <person name="Hickey E.K."/>
            <person name="Clayton R.A."/>
            <person name="Ketchum K.A."/>
            <person name="Sodergren E."/>
            <person name="Hardham J.M."/>
            <person name="McLeod M.P."/>
            <person name="Salzberg S.L."/>
            <person name="Peterson J.D."/>
            <person name="Khalak H.G."/>
            <person name="Richardson D.L."/>
            <person name="Howell J.K."/>
            <person name="Chidambaram M."/>
            <person name="Utterback T.R."/>
            <person name="McDonald L.A."/>
            <person name="Artiach P."/>
            <person name="Bowman C."/>
            <person name="Cotton M.D."/>
            <person name="Fujii C."/>
            <person name="Garland S.A."/>
            <person name="Hatch B."/>
            <person name="Horst K."/>
            <person name="Roberts K.M."/>
            <person name="Sandusky M."/>
            <person name="Weidman J.F."/>
            <person name="Smith H.O."/>
            <person name="Venter J.C."/>
        </authorList>
    </citation>
    <scope>NUCLEOTIDE SEQUENCE [LARGE SCALE GENOMIC DNA]</scope>
    <source>
        <strain>Nichols</strain>
    </source>
</reference>
<gene>
    <name type="primary">csd</name>
    <name type="ordered locus">TP_0614</name>
</gene>
<comment type="function">
    <text evidence="1">Catalyzes the removal of elemental sulfur and selenium atoms from L-cysteine, L-cystine, L-selenocysteine, and L-selenocystine to produce L-alanine.</text>
</comment>
<comment type="catalytic activity">
    <reaction>
        <text>(sulfur carrier)-H + L-cysteine = (sulfur carrier)-SH + L-alanine</text>
        <dbReference type="Rhea" id="RHEA:43892"/>
        <dbReference type="Rhea" id="RHEA-COMP:14737"/>
        <dbReference type="Rhea" id="RHEA-COMP:14739"/>
        <dbReference type="ChEBI" id="CHEBI:29917"/>
        <dbReference type="ChEBI" id="CHEBI:35235"/>
        <dbReference type="ChEBI" id="CHEBI:57972"/>
        <dbReference type="ChEBI" id="CHEBI:64428"/>
        <dbReference type="EC" id="2.8.1.7"/>
    </reaction>
</comment>
<comment type="cofactor">
    <cofactor evidence="1">
        <name>pyridoxal 5'-phosphate</name>
        <dbReference type="ChEBI" id="CHEBI:597326"/>
    </cofactor>
</comment>
<comment type="similarity">
    <text evidence="2">Belongs to the class-V pyridoxal-phosphate-dependent aminotransferase family. Csd subfamily.</text>
</comment>
<feature type="chain" id="PRO_0000150320" description="Probable cysteine desulfurase">
    <location>
        <begin position="1"/>
        <end position="404"/>
    </location>
</feature>
<feature type="active site" description="Cysteine persulfide intermediate" evidence="1">
    <location>
        <position position="360"/>
    </location>
</feature>
<feature type="modified residue" description="N6-(pyridoxal phosphate)lysine" evidence="1">
    <location>
        <position position="221"/>
    </location>
</feature>
<evidence type="ECO:0000250" key="1"/>
<evidence type="ECO:0000305" key="2"/>
<proteinExistence type="inferred from homology"/>
<dbReference type="EC" id="2.8.1.7"/>
<dbReference type="EMBL" id="AE000520">
    <property type="protein sequence ID" value="AAC65590.1"/>
    <property type="molecule type" value="Genomic_DNA"/>
</dbReference>
<dbReference type="PIR" id="C71303">
    <property type="entry name" value="C71303"/>
</dbReference>
<dbReference type="RefSeq" id="WP_010882060.1">
    <property type="nucleotide sequence ID" value="NC_021490.2"/>
</dbReference>
<dbReference type="SMR" id="O83623"/>
<dbReference type="STRING" id="243276.TP_0614"/>
<dbReference type="EnsemblBacteria" id="AAC65590">
    <property type="protein sequence ID" value="AAC65590"/>
    <property type="gene ID" value="TP_0614"/>
</dbReference>
<dbReference type="KEGG" id="tpa:TP_0614"/>
<dbReference type="KEGG" id="tpw:TPANIC_0614"/>
<dbReference type="eggNOG" id="COG0520">
    <property type="taxonomic scope" value="Bacteria"/>
</dbReference>
<dbReference type="HOGENOM" id="CLU_003433_2_5_12"/>
<dbReference type="OrthoDB" id="9804366at2"/>
<dbReference type="Proteomes" id="UP000000811">
    <property type="component" value="Chromosome"/>
</dbReference>
<dbReference type="GO" id="GO:0031071">
    <property type="term" value="F:cysteine desulfurase activity"/>
    <property type="evidence" value="ECO:0007669"/>
    <property type="project" value="UniProtKB-EC"/>
</dbReference>
<dbReference type="GO" id="GO:0030170">
    <property type="term" value="F:pyridoxal phosphate binding"/>
    <property type="evidence" value="ECO:0007669"/>
    <property type="project" value="InterPro"/>
</dbReference>
<dbReference type="GO" id="GO:0006534">
    <property type="term" value="P:cysteine metabolic process"/>
    <property type="evidence" value="ECO:0007669"/>
    <property type="project" value="InterPro"/>
</dbReference>
<dbReference type="CDD" id="cd06453">
    <property type="entry name" value="SufS_like"/>
    <property type="match status" value="1"/>
</dbReference>
<dbReference type="Gene3D" id="3.90.1150.10">
    <property type="entry name" value="Aspartate Aminotransferase, domain 1"/>
    <property type="match status" value="1"/>
</dbReference>
<dbReference type="Gene3D" id="3.40.640.10">
    <property type="entry name" value="Type I PLP-dependent aspartate aminotransferase-like (Major domain)"/>
    <property type="match status" value="1"/>
</dbReference>
<dbReference type="InterPro" id="IPR000192">
    <property type="entry name" value="Aminotrans_V_dom"/>
</dbReference>
<dbReference type="InterPro" id="IPR020578">
    <property type="entry name" value="Aminotrans_V_PyrdxlP_BS"/>
</dbReference>
<dbReference type="InterPro" id="IPR010970">
    <property type="entry name" value="Cys_dSase_SufS"/>
</dbReference>
<dbReference type="InterPro" id="IPR015424">
    <property type="entry name" value="PyrdxlP-dep_Trfase"/>
</dbReference>
<dbReference type="InterPro" id="IPR015421">
    <property type="entry name" value="PyrdxlP-dep_Trfase_major"/>
</dbReference>
<dbReference type="InterPro" id="IPR015422">
    <property type="entry name" value="PyrdxlP-dep_Trfase_small"/>
</dbReference>
<dbReference type="NCBIfam" id="TIGR01979">
    <property type="entry name" value="sufS"/>
    <property type="match status" value="1"/>
</dbReference>
<dbReference type="PANTHER" id="PTHR43586">
    <property type="entry name" value="CYSTEINE DESULFURASE"/>
    <property type="match status" value="1"/>
</dbReference>
<dbReference type="PANTHER" id="PTHR43586:SF8">
    <property type="entry name" value="CYSTEINE DESULFURASE 1, CHLOROPLASTIC"/>
    <property type="match status" value="1"/>
</dbReference>
<dbReference type="Pfam" id="PF00266">
    <property type="entry name" value="Aminotran_5"/>
    <property type="match status" value="1"/>
</dbReference>
<dbReference type="SUPFAM" id="SSF53383">
    <property type="entry name" value="PLP-dependent transferases"/>
    <property type="match status" value="1"/>
</dbReference>
<dbReference type="PROSITE" id="PS00595">
    <property type="entry name" value="AA_TRANSFER_CLASS_5"/>
    <property type="match status" value="1"/>
</dbReference>